<comment type="function">
    <text evidence="1">Catalyzes the synthesis of activated sulfate.</text>
</comment>
<comment type="catalytic activity">
    <reaction evidence="1">
        <text>adenosine 5'-phosphosulfate + ATP = 3'-phosphoadenylyl sulfate + ADP + H(+)</text>
        <dbReference type="Rhea" id="RHEA:24152"/>
        <dbReference type="ChEBI" id="CHEBI:15378"/>
        <dbReference type="ChEBI" id="CHEBI:30616"/>
        <dbReference type="ChEBI" id="CHEBI:58243"/>
        <dbReference type="ChEBI" id="CHEBI:58339"/>
        <dbReference type="ChEBI" id="CHEBI:456216"/>
        <dbReference type="EC" id="2.7.1.25"/>
    </reaction>
</comment>
<comment type="pathway">
    <text evidence="1">Sulfur metabolism; hydrogen sulfide biosynthesis; sulfite from sulfate: step 2/3.</text>
</comment>
<comment type="similarity">
    <text evidence="1">Belongs to the APS kinase family.</text>
</comment>
<name>CYSC_RIPO1</name>
<protein>
    <recommendedName>
        <fullName evidence="1">Adenylyl-sulfate kinase</fullName>
        <ecNumber evidence="1">2.7.1.25</ecNumber>
    </recommendedName>
    <alternativeName>
        <fullName evidence="1">APS kinase</fullName>
    </alternativeName>
    <alternativeName>
        <fullName evidence="1">ATP adenosine-5'-phosphosulfate 3'-phosphotransferase</fullName>
    </alternativeName>
    <alternativeName>
        <fullName evidence="1">Adenosine-5'-phosphosulfate kinase</fullName>
    </alternativeName>
</protein>
<accession>B7K5B1</accession>
<sequence>MKQQGVTIWLTGLSGAGKTTITHALEQKLREAGYALEVLDGDIVRTNLTKGLGFSKEDRDTNIRRIGFVANLLTRNGVIVLVSAISPYRDIRDEVRGTIGNFVEVFVNAPLNVCEERDVKGLYKKARAGEIKSFTGIDDPYEPPLNPEIECRTDLETLEESVTKIWQKLEELGYLAKPVAI</sequence>
<keyword id="KW-0067">ATP-binding</keyword>
<keyword id="KW-0418">Kinase</keyword>
<keyword id="KW-0547">Nucleotide-binding</keyword>
<keyword id="KW-0597">Phosphoprotein</keyword>
<keyword id="KW-1185">Reference proteome</keyword>
<keyword id="KW-0808">Transferase</keyword>
<organism>
    <name type="scientific">Rippkaea orientalis (strain PCC 8801 / RF-1)</name>
    <name type="common">Cyanothece sp. (strain PCC 8801)</name>
    <dbReference type="NCBI Taxonomy" id="41431"/>
    <lineage>
        <taxon>Bacteria</taxon>
        <taxon>Bacillati</taxon>
        <taxon>Cyanobacteriota</taxon>
        <taxon>Cyanophyceae</taxon>
        <taxon>Oscillatoriophycideae</taxon>
        <taxon>Chroococcales</taxon>
        <taxon>Aphanothecaceae</taxon>
        <taxon>Rippkaea</taxon>
        <taxon>Rippkaea orientalis</taxon>
    </lineage>
</organism>
<dbReference type="EC" id="2.7.1.25" evidence="1"/>
<dbReference type="EMBL" id="CP001287">
    <property type="protein sequence ID" value="ACK67937.1"/>
    <property type="molecule type" value="Genomic_DNA"/>
</dbReference>
<dbReference type="RefSeq" id="WP_012597191.1">
    <property type="nucleotide sequence ID" value="NC_011726.1"/>
</dbReference>
<dbReference type="SMR" id="B7K5B1"/>
<dbReference type="STRING" id="41431.PCC8801_3998"/>
<dbReference type="KEGG" id="cyp:PCC8801_3998"/>
<dbReference type="eggNOG" id="COG0529">
    <property type="taxonomic scope" value="Bacteria"/>
</dbReference>
<dbReference type="HOGENOM" id="CLU_046932_2_1_3"/>
<dbReference type="OrthoDB" id="9804504at2"/>
<dbReference type="UniPathway" id="UPA00140">
    <property type="reaction ID" value="UER00205"/>
</dbReference>
<dbReference type="Proteomes" id="UP000008204">
    <property type="component" value="Chromosome"/>
</dbReference>
<dbReference type="GO" id="GO:0005737">
    <property type="term" value="C:cytoplasm"/>
    <property type="evidence" value="ECO:0007669"/>
    <property type="project" value="TreeGrafter"/>
</dbReference>
<dbReference type="GO" id="GO:0004020">
    <property type="term" value="F:adenylylsulfate kinase activity"/>
    <property type="evidence" value="ECO:0007669"/>
    <property type="project" value="UniProtKB-UniRule"/>
</dbReference>
<dbReference type="GO" id="GO:0005524">
    <property type="term" value="F:ATP binding"/>
    <property type="evidence" value="ECO:0007669"/>
    <property type="project" value="UniProtKB-UniRule"/>
</dbReference>
<dbReference type="GO" id="GO:0004781">
    <property type="term" value="F:sulfate adenylyltransferase (ATP) activity"/>
    <property type="evidence" value="ECO:0007669"/>
    <property type="project" value="TreeGrafter"/>
</dbReference>
<dbReference type="GO" id="GO:0070814">
    <property type="term" value="P:hydrogen sulfide biosynthetic process"/>
    <property type="evidence" value="ECO:0007669"/>
    <property type="project" value="UniProtKB-UniRule"/>
</dbReference>
<dbReference type="GO" id="GO:0010134">
    <property type="term" value="P:sulfate assimilation via adenylyl sulfate reduction"/>
    <property type="evidence" value="ECO:0007669"/>
    <property type="project" value="TreeGrafter"/>
</dbReference>
<dbReference type="GO" id="GO:0019379">
    <property type="term" value="P:sulfate assimilation, phosphoadenylyl sulfate reduction by phosphoadenylyl-sulfate reductase (thioredoxin)"/>
    <property type="evidence" value="ECO:0007669"/>
    <property type="project" value="TreeGrafter"/>
</dbReference>
<dbReference type="CDD" id="cd02027">
    <property type="entry name" value="APSK"/>
    <property type="match status" value="1"/>
</dbReference>
<dbReference type="FunFam" id="3.40.50.300:FF:000802">
    <property type="entry name" value="Sulfate adenylyltransferase"/>
    <property type="match status" value="1"/>
</dbReference>
<dbReference type="Gene3D" id="3.40.50.300">
    <property type="entry name" value="P-loop containing nucleotide triphosphate hydrolases"/>
    <property type="match status" value="1"/>
</dbReference>
<dbReference type="HAMAP" id="MF_00065">
    <property type="entry name" value="Adenylyl_sulf_kinase"/>
    <property type="match status" value="1"/>
</dbReference>
<dbReference type="InterPro" id="IPR002891">
    <property type="entry name" value="APS_kinase"/>
</dbReference>
<dbReference type="InterPro" id="IPR027417">
    <property type="entry name" value="P-loop_NTPase"/>
</dbReference>
<dbReference type="InterPro" id="IPR050512">
    <property type="entry name" value="Sulf_AdTrans/APS_kinase"/>
</dbReference>
<dbReference type="NCBIfam" id="TIGR00455">
    <property type="entry name" value="apsK"/>
    <property type="match status" value="1"/>
</dbReference>
<dbReference type="NCBIfam" id="NF002059">
    <property type="entry name" value="PRK00889.1"/>
    <property type="match status" value="1"/>
</dbReference>
<dbReference type="NCBIfam" id="NF003013">
    <property type="entry name" value="PRK03846.1"/>
    <property type="match status" value="1"/>
</dbReference>
<dbReference type="PANTHER" id="PTHR42700">
    <property type="entry name" value="SULFATE ADENYLYLTRANSFERASE"/>
    <property type="match status" value="1"/>
</dbReference>
<dbReference type="PANTHER" id="PTHR42700:SF1">
    <property type="entry name" value="SULFATE ADENYLYLTRANSFERASE"/>
    <property type="match status" value="1"/>
</dbReference>
<dbReference type="Pfam" id="PF01583">
    <property type="entry name" value="APS_kinase"/>
    <property type="match status" value="1"/>
</dbReference>
<dbReference type="SUPFAM" id="SSF52540">
    <property type="entry name" value="P-loop containing nucleoside triphosphate hydrolases"/>
    <property type="match status" value="1"/>
</dbReference>
<gene>
    <name evidence="1" type="primary">cysC</name>
    <name type="ordered locus">PCC8801_3998</name>
</gene>
<feature type="chain" id="PRO_1000116965" description="Adenylyl-sulfate kinase">
    <location>
        <begin position="1"/>
        <end position="181"/>
    </location>
</feature>
<feature type="active site" description="Phosphoserine intermediate" evidence="1">
    <location>
        <position position="86"/>
    </location>
</feature>
<feature type="binding site" evidence="1">
    <location>
        <begin position="12"/>
        <end position="19"/>
    </location>
    <ligand>
        <name>ATP</name>
        <dbReference type="ChEBI" id="CHEBI:30616"/>
    </ligand>
</feature>
<proteinExistence type="inferred from homology"/>
<reference key="1">
    <citation type="journal article" date="2011" name="MBio">
        <title>Novel metabolic attributes of the genus Cyanothece, comprising a group of unicellular nitrogen-fixing Cyanobacteria.</title>
        <authorList>
            <person name="Bandyopadhyay A."/>
            <person name="Elvitigala T."/>
            <person name="Welsh E."/>
            <person name="Stockel J."/>
            <person name="Liberton M."/>
            <person name="Min H."/>
            <person name="Sherman L.A."/>
            <person name="Pakrasi H.B."/>
        </authorList>
    </citation>
    <scope>NUCLEOTIDE SEQUENCE [LARGE SCALE GENOMIC DNA]</scope>
    <source>
        <strain>PCC 8801 / RF-1</strain>
    </source>
</reference>
<evidence type="ECO:0000255" key="1">
    <source>
        <dbReference type="HAMAP-Rule" id="MF_00065"/>
    </source>
</evidence>